<evidence type="ECO:0000255" key="1">
    <source>
        <dbReference type="HAMAP-Rule" id="MF_01310"/>
    </source>
</evidence>
<evidence type="ECO:0000305" key="2"/>
<organism>
    <name type="scientific">Acinetobacter baumannii (strain ATCC 17978 / DSM 105126 / CIP 53.77 / LMG 1025 / NCDC KC755 / 5377)</name>
    <dbReference type="NCBI Taxonomy" id="400667"/>
    <lineage>
        <taxon>Bacteria</taxon>
        <taxon>Pseudomonadati</taxon>
        <taxon>Pseudomonadota</taxon>
        <taxon>Gammaproteobacteria</taxon>
        <taxon>Moraxellales</taxon>
        <taxon>Moraxellaceae</taxon>
        <taxon>Acinetobacter</taxon>
        <taxon>Acinetobacter calcoaceticus/baumannii complex</taxon>
    </lineage>
</organism>
<feature type="chain" id="PRO_0000294705" description="Small ribosomal subunit protein uS11">
    <location>
        <begin position="1"/>
        <end position="128"/>
    </location>
</feature>
<name>RS11_ACIBT</name>
<keyword id="KW-0687">Ribonucleoprotein</keyword>
<keyword id="KW-0689">Ribosomal protein</keyword>
<keyword id="KW-0694">RNA-binding</keyword>
<keyword id="KW-0699">rRNA-binding</keyword>
<reference key="1">
    <citation type="journal article" date="2007" name="Genes Dev.">
        <title>New insights into Acinetobacter baumannii pathogenesis revealed by high-density pyrosequencing and transposon mutagenesis.</title>
        <authorList>
            <person name="Smith M.G."/>
            <person name="Gianoulis T.A."/>
            <person name="Pukatzki S."/>
            <person name="Mekalanos J.J."/>
            <person name="Ornston L.N."/>
            <person name="Gerstein M."/>
            <person name="Snyder M."/>
        </authorList>
    </citation>
    <scope>NUCLEOTIDE SEQUENCE [LARGE SCALE GENOMIC DNA]</scope>
    <source>
        <strain>ATCC 17978 / DSM 105126 / CIP 53.77 / LMG 1025 / NCDC KC755 / 5377</strain>
    </source>
</reference>
<accession>A3M961</accession>
<protein>
    <recommendedName>
        <fullName evidence="1">Small ribosomal subunit protein uS11</fullName>
    </recommendedName>
    <alternativeName>
        <fullName evidence="2">30S ribosomal protein S11</fullName>
    </alternativeName>
</protein>
<proteinExistence type="inferred from homology"/>
<dbReference type="EMBL" id="CP000521">
    <property type="protein sequence ID" value="ABO13455.2"/>
    <property type="molecule type" value="Genomic_DNA"/>
</dbReference>
<dbReference type="RefSeq" id="WP_001040166.1">
    <property type="nucleotide sequence ID" value="NZ_CP053098.1"/>
</dbReference>
<dbReference type="SMR" id="A3M961"/>
<dbReference type="GeneID" id="97425222"/>
<dbReference type="KEGG" id="acb:A1S_3058"/>
<dbReference type="HOGENOM" id="CLU_072439_5_0_6"/>
<dbReference type="GO" id="GO:1990904">
    <property type="term" value="C:ribonucleoprotein complex"/>
    <property type="evidence" value="ECO:0007669"/>
    <property type="project" value="UniProtKB-KW"/>
</dbReference>
<dbReference type="GO" id="GO:0005840">
    <property type="term" value="C:ribosome"/>
    <property type="evidence" value="ECO:0007669"/>
    <property type="project" value="UniProtKB-KW"/>
</dbReference>
<dbReference type="GO" id="GO:0019843">
    <property type="term" value="F:rRNA binding"/>
    <property type="evidence" value="ECO:0007669"/>
    <property type="project" value="UniProtKB-UniRule"/>
</dbReference>
<dbReference type="GO" id="GO:0003735">
    <property type="term" value="F:structural constituent of ribosome"/>
    <property type="evidence" value="ECO:0007669"/>
    <property type="project" value="InterPro"/>
</dbReference>
<dbReference type="GO" id="GO:0006412">
    <property type="term" value="P:translation"/>
    <property type="evidence" value="ECO:0007669"/>
    <property type="project" value="UniProtKB-UniRule"/>
</dbReference>
<dbReference type="FunFam" id="3.30.420.80:FF:000001">
    <property type="entry name" value="30S ribosomal protein S11"/>
    <property type="match status" value="1"/>
</dbReference>
<dbReference type="Gene3D" id="3.30.420.80">
    <property type="entry name" value="Ribosomal protein S11"/>
    <property type="match status" value="1"/>
</dbReference>
<dbReference type="HAMAP" id="MF_01310">
    <property type="entry name" value="Ribosomal_uS11"/>
    <property type="match status" value="1"/>
</dbReference>
<dbReference type="InterPro" id="IPR001971">
    <property type="entry name" value="Ribosomal_uS11"/>
</dbReference>
<dbReference type="InterPro" id="IPR019981">
    <property type="entry name" value="Ribosomal_uS11_bac-type"/>
</dbReference>
<dbReference type="InterPro" id="IPR018102">
    <property type="entry name" value="Ribosomal_uS11_CS"/>
</dbReference>
<dbReference type="InterPro" id="IPR036967">
    <property type="entry name" value="Ribosomal_uS11_sf"/>
</dbReference>
<dbReference type="NCBIfam" id="NF003698">
    <property type="entry name" value="PRK05309.1"/>
    <property type="match status" value="1"/>
</dbReference>
<dbReference type="NCBIfam" id="TIGR03632">
    <property type="entry name" value="uS11_bact"/>
    <property type="match status" value="1"/>
</dbReference>
<dbReference type="PANTHER" id="PTHR11759">
    <property type="entry name" value="40S RIBOSOMAL PROTEIN S14/30S RIBOSOMAL PROTEIN S11"/>
    <property type="match status" value="1"/>
</dbReference>
<dbReference type="Pfam" id="PF00411">
    <property type="entry name" value="Ribosomal_S11"/>
    <property type="match status" value="1"/>
</dbReference>
<dbReference type="PIRSF" id="PIRSF002131">
    <property type="entry name" value="Ribosomal_S11"/>
    <property type="match status" value="1"/>
</dbReference>
<dbReference type="SUPFAM" id="SSF53137">
    <property type="entry name" value="Translational machinery components"/>
    <property type="match status" value="1"/>
</dbReference>
<dbReference type="PROSITE" id="PS00054">
    <property type="entry name" value="RIBOSOMAL_S11"/>
    <property type="match status" value="1"/>
</dbReference>
<sequence length="128" mass="13534">MAKDTRTRKKVTRTVSEGVAHIHASFNNTIVTITDRQGNALAWATSGGQGFRGSRKSTPFAAQVAAEVAGKAALDYGLKNLDVLVKGPGPGRESAVRALGAVGYKINSITDVTPIPHNGCRPPKKRRV</sequence>
<gene>
    <name evidence="1" type="primary">rpsK</name>
    <name type="ordered locus">A1S_3058</name>
</gene>
<comment type="function">
    <text evidence="1">Located on the platform of the 30S subunit, it bridges several disparate RNA helices of the 16S rRNA. Forms part of the Shine-Dalgarno cleft in the 70S ribosome.</text>
</comment>
<comment type="subunit">
    <text evidence="1">Part of the 30S ribosomal subunit. Interacts with proteins S7 and S18. Binds to IF-3.</text>
</comment>
<comment type="similarity">
    <text evidence="1">Belongs to the universal ribosomal protein uS11 family.</text>
</comment>